<protein>
    <recommendedName>
        <fullName>Procollagen galactosyltransferase 1</fullName>
        <ecNumber evidence="1">2.4.1.50</ecNumber>
    </recommendedName>
    <alternativeName>
        <fullName>Collagen beta(1-O)galactosyltransferase 1</fullName>
    </alternativeName>
    <alternativeName>
        <fullName>Glycosyltransferase 25 family member 1</fullName>
    </alternativeName>
    <alternativeName>
        <fullName>Hydroxylysine galactosyltransferase 1</fullName>
    </alternativeName>
</protein>
<keyword id="KW-0256">Endoplasmic reticulum</keyword>
<keyword id="KW-0325">Glycoprotein</keyword>
<keyword id="KW-0328">Glycosyltransferase</keyword>
<keyword id="KW-1185">Reference proteome</keyword>
<keyword id="KW-0732">Signal</keyword>
<keyword id="KW-0808">Transferase</keyword>
<accession>Q8K297</accession>
<accession>Q3V3R5</accession>
<accession>Q6PGL1</accession>
<organism>
    <name type="scientific">Mus musculus</name>
    <name type="common">Mouse</name>
    <dbReference type="NCBI Taxonomy" id="10090"/>
    <lineage>
        <taxon>Eukaryota</taxon>
        <taxon>Metazoa</taxon>
        <taxon>Chordata</taxon>
        <taxon>Craniata</taxon>
        <taxon>Vertebrata</taxon>
        <taxon>Euteleostomi</taxon>
        <taxon>Mammalia</taxon>
        <taxon>Eutheria</taxon>
        <taxon>Euarchontoglires</taxon>
        <taxon>Glires</taxon>
        <taxon>Rodentia</taxon>
        <taxon>Myomorpha</taxon>
        <taxon>Muroidea</taxon>
        <taxon>Muridae</taxon>
        <taxon>Murinae</taxon>
        <taxon>Mus</taxon>
        <taxon>Mus</taxon>
    </lineage>
</organism>
<name>GT251_MOUSE</name>
<reference key="1">
    <citation type="journal article" date="2005" name="Science">
        <title>The transcriptional landscape of the mammalian genome.</title>
        <authorList>
            <person name="Carninci P."/>
            <person name="Kasukawa T."/>
            <person name="Katayama S."/>
            <person name="Gough J."/>
            <person name="Frith M.C."/>
            <person name="Maeda N."/>
            <person name="Oyama R."/>
            <person name="Ravasi T."/>
            <person name="Lenhard B."/>
            <person name="Wells C."/>
            <person name="Kodzius R."/>
            <person name="Shimokawa K."/>
            <person name="Bajic V.B."/>
            <person name="Brenner S.E."/>
            <person name="Batalov S."/>
            <person name="Forrest A.R."/>
            <person name="Zavolan M."/>
            <person name="Davis M.J."/>
            <person name="Wilming L.G."/>
            <person name="Aidinis V."/>
            <person name="Allen J.E."/>
            <person name="Ambesi-Impiombato A."/>
            <person name="Apweiler R."/>
            <person name="Aturaliya R.N."/>
            <person name="Bailey T.L."/>
            <person name="Bansal M."/>
            <person name="Baxter L."/>
            <person name="Beisel K.W."/>
            <person name="Bersano T."/>
            <person name="Bono H."/>
            <person name="Chalk A.M."/>
            <person name="Chiu K.P."/>
            <person name="Choudhary V."/>
            <person name="Christoffels A."/>
            <person name="Clutterbuck D.R."/>
            <person name="Crowe M.L."/>
            <person name="Dalla E."/>
            <person name="Dalrymple B.P."/>
            <person name="de Bono B."/>
            <person name="Della Gatta G."/>
            <person name="di Bernardo D."/>
            <person name="Down T."/>
            <person name="Engstrom P."/>
            <person name="Fagiolini M."/>
            <person name="Faulkner G."/>
            <person name="Fletcher C.F."/>
            <person name="Fukushima T."/>
            <person name="Furuno M."/>
            <person name="Futaki S."/>
            <person name="Gariboldi M."/>
            <person name="Georgii-Hemming P."/>
            <person name="Gingeras T.R."/>
            <person name="Gojobori T."/>
            <person name="Green R.E."/>
            <person name="Gustincich S."/>
            <person name="Harbers M."/>
            <person name="Hayashi Y."/>
            <person name="Hensch T.K."/>
            <person name="Hirokawa N."/>
            <person name="Hill D."/>
            <person name="Huminiecki L."/>
            <person name="Iacono M."/>
            <person name="Ikeo K."/>
            <person name="Iwama A."/>
            <person name="Ishikawa T."/>
            <person name="Jakt M."/>
            <person name="Kanapin A."/>
            <person name="Katoh M."/>
            <person name="Kawasawa Y."/>
            <person name="Kelso J."/>
            <person name="Kitamura H."/>
            <person name="Kitano H."/>
            <person name="Kollias G."/>
            <person name="Krishnan S.P."/>
            <person name="Kruger A."/>
            <person name="Kummerfeld S.K."/>
            <person name="Kurochkin I.V."/>
            <person name="Lareau L.F."/>
            <person name="Lazarevic D."/>
            <person name="Lipovich L."/>
            <person name="Liu J."/>
            <person name="Liuni S."/>
            <person name="McWilliam S."/>
            <person name="Madan Babu M."/>
            <person name="Madera M."/>
            <person name="Marchionni L."/>
            <person name="Matsuda H."/>
            <person name="Matsuzawa S."/>
            <person name="Miki H."/>
            <person name="Mignone F."/>
            <person name="Miyake S."/>
            <person name="Morris K."/>
            <person name="Mottagui-Tabar S."/>
            <person name="Mulder N."/>
            <person name="Nakano N."/>
            <person name="Nakauchi H."/>
            <person name="Ng P."/>
            <person name="Nilsson R."/>
            <person name="Nishiguchi S."/>
            <person name="Nishikawa S."/>
            <person name="Nori F."/>
            <person name="Ohara O."/>
            <person name="Okazaki Y."/>
            <person name="Orlando V."/>
            <person name="Pang K.C."/>
            <person name="Pavan W.J."/>
            <person name="Pavesi G."/>
            <person name="Pesole G."/>
            <person name="Petrovsky N."/>
            <person name="Piazza S."/>
            <person name="Reed J."/>
            <person name="Reid J.F."/>
            <person name="Ring B.Z."/>
            <person name="Ringwald M."/>
            <person name="Rost B."/>
            <person name="Ruan Y."/>
            <person name="Salzberg S.L."/>
            <person name="Sandelin A."/>
            <person name="Schneider C."/>
            <person name="Schoenbach C."/>
            <person name="Sekiguchi K."/>
            <person name="Semple C.A."/>
            <person name="Seno S."/>
            <person name="Sessa L."/>
            <person name="Sheng Y."/>
            <person name="Shibata Y."/>
            <person name="Shimada H."/>
            <person name="Shimada K."/>
            <person name="Silva D."/>
            <person name="Sinclair B."/>
            <person name="Sperling S."/>
            <person name="Stupka E."/>
            <person name="Sugiura K."/>
            <person name="Sultana R."/>
            <person name="Takenaka Y."/>
            <person name="Taki K."/>
            <person name="Tammoja K."/>
            <person name="Tan S.L."/>
            <person name="Tang S."/>
            <person name="Taylor M.S."/>
            <person name="Tegner J."/>
            <person name="Teichmann S.A."/>
            <person name="Ueda H.R."/>
            <person name="van Nimwegen E."/>
            <person name="Verardo R."/>
            <person name="Wei C.L."/>
            <person name="Yagi K."/>
            <person name="Yamanishi H."/>
            <person name="Zabarovsky E."/>
            <person name="Zhu S."/>
            <person name="Zimmer A."/>
            <person name="Hide W."/>
            <person name="Bult C."/>
            <person name="Grimmond S.M."/>
            <person name="Teasdale R.D."/>
            <person name="Liu E.T."/>
            <person name="Brusic V."/>
            <person name="Quackenbush J."/>
            <person name="Wahlestedt C."/>
            <person name="Mattick J.S."/>
            <person name="Hume D.A."/>
            <person name="Kai C."/>
            <person name="Sasaki D."/>
            <person name="Tomaru Y."/>
            <person name="Fukuda S."/>
            <person name="Kanamori-Katayama M."/>
            <person name="Suzuki M."/>
            <person name="Aoki J."/>
            <person name="Arakawa T."/>
            <person name="Iida J."/>
            <person name="Imamura K."/>
            <person name="Itoh M."/>
            <person name="Kato T."/>
            <person name="Kawaji H."/>
            <person name="Kawagashira N."/>
            <person name="Kawashima T."/>
            <person name="Kojima M."/>
            <person name="Kondo S."/>
            <person name="Konno H."/>
            <person name="Nakano K."/>
            <person name="Ninomiya N."/>
            <person name="Nishio T."/>
            <person name="Okada M."/>
            <person name="Plessy C."/>
            <person name="Shibata K."/>
            <person name="Shiraki T."/>
            <person name="Suzuki S."/>
            <person name="Tagami M."/>
            <person name="Waki K."/>
            <person name="Watahiki A."/>
            <person name="Okamura-Oho Y."/>
            <person name="Suzuki H."/>
            <person name="Kawai J."/>
            <person name="Hayashizaki Y."/>
        </authorList>
    </citation>
    <scope>NUCLEOTIDE SEQUENCE [LARGE SCALE MRNA]</scope>
    <source>
        <strain>C57BL/6J</strain>
        <tissue>Cerebellum</tissue>
    </source>
</reference>
<reference key="2">
    <citation type="journal article" date="2004" name="Genome Res.">
        <title>The status, quality, and expansion of the NIH full-length cDNA project: the Mammalian Gene Collection (MGC).</title>
        <authorList>
            <consortium name="The MGC Project Team"/>
        </authorList>
    </citation>
    <scope>NUCLEOTIDE SEQUENCE [LARGE SCALE MRNA]</scope>
    <source>
        <strain>C57BL/6J</strain>
        <strain>FVB/N</strain>
        <tissue>Brain</tissue>
        <tissue>Mammary tumor</tissue>
    </source>
</reference>
<reference key="3">
    <citation type="journal article" date="2009" name="Nat. Biotechnol.">
        <title>Mass-spectrometric identification and relative quantification of N-linked cell surface glycoproteins.</title>
        <authorList>
            <person name="Wollscheid B."/>
            <person name="Bausch-Fluck D."/>
            <person name="Henderson C."/>
            <person name="O'Brien R."/>
            <person name="Bibel M."/>
            <person name="Schiess R."/>
            <person name="Aebersold R."/>
            <person name="Watts J.D."/>
        </authorList>
    </citation>
    <scope>GLYCOSYLATION [LARGE SCALE ANALYSIS] AT ASN-91</scope>
</reference>
<reference key="4">
    <citation type="journal article" date="2010" name="Cell">
        <title>A tissue-specific atlas of mouse protein phosphorylation and expression.</title>
        <authorList>
            <person name="Huttlin E.L."/>
            <person name="Jedrychowski M.P."/>
            <person name="Elias J.E."/>
            <person name="Goswami T."/>
            <person name="Rad R."/>
            <person name="Beausoleil S.A."/>
            <person name="Villen J."/>
            <person name="Haas W."/>
            <person name="Sowa M.E."/>
            <person name="Gygi S.P."/>
        </authorList>
    </citation>
    <scope>IDENTIFICATION BY MASS SPECTROMETRY [LARGE SCALE ANALYSIS]</scope>
    <source>
        <tissue>Brown adipose tissue</tissue>
        <tissue>Heart</tissue>
        <tissue>Kidney</tissue>
        <tissue>Liver</tissue>
        <tissue>Lung</tissue>
        <tissue>Pancreas</tissue>
        <tissue>Spleen</tissue>
        <tissue>Testis</tissue>
    </source>
</reference>
<gene>
    <name type="primary">Colgalt1</name>
    <name type="synonym">Glt25d1</name>
</gene>
<comment type="function">
    <text evidence="1">Beta-galactosyltransferase that transfers beta-galactose to hydroxylysine residues of type I collagen. By acting on collagen glycosylation, facilitates the formation of collagen triple helix. Also involved in the biosynthesis of collagen type IV.</text>
</comment>
<comment type="catalytic activity">
    <reaction evidence="1">
        <text>(5R)-5-hydroxy-L-lysyl-[collagen] + UDP-alpha-D-galactose = (5R)-5-O-(beta-D-galactosyl)-5-hydroxy-L-lysyl-[collagen] + UDP + H(+)</text>
        <dbReference type="Rhea" id="RHEA:12637"/>
        <dbReference type="Rhea" id="RHEA-COMP:12752"/>
        <dbReference type="Rhea" id="RHEA-COMP:12753"/>
        <dbReference type="ChEBI" id="CHEBI:15378"/>
        <dbReference type="ChEBI" id="CHEBI:58223"/>
        <dbReference type="ChEBI" id="CHEBI:66914"/>
        <dbReference type="ChEBI" id="CHEBI:133442"/>
        <dbReference type="ChEBI" id="CHEBI:133443"/>
        <dbReference type="EC" id="2.4.1.50"/>
    </reaction>
</comment>
<comment type="subcellular location">
    <subcellularLocation>
        <location evidence="3">Endoplasmic reticulum lumen</location>
    </subcellularLocation>
    <text evidence="1">Colocalized with PLOD3 and mannose binding lectin.</text>
</comment>
<comment type="PTM">
    <text evidence="1">N-glycosylated.</text>
</comment>
<comment type="similarity">
    <text evidence="6">Belongs to the glycosyltransferase 25 family.</text>
</comment>
<proteinExistence type="evidence at protein level"/>
<dbReference type="EC" id="2.4.1.50" evidence="1"/>
<dbReference type="EMBL" id="AK035788">
    <property type="protein sequence ID" value="BAE43293.1"/>
    <property type="molecule type" value="mRNA"/>
</dbReference>
<dbReference type="EMBL" id="BC032165">
    <property type="protein sequence ID" value="AAH32165.1"/>
    <property type="molecule type" value="mRNA"/>
</dbReference>
<dbReference type="EMBL" id="BC056951">
    <property type="protein sequence ID" value="AAH56951.1"/>
    <property type="molecule type" value="mRNA"/>
</dbReference>
<dbReference type="CCDS" id="CCDS22401.1"/>
<dbReference type="RefSeq" id="NP_666323.2">
    <property type="nucleotide sequence ID" value="NM_146211.3"/>
</dbReference>
<dbReference type="SMR" id="Q8K297"/>
<dbReference type="BioGRID" id="231529">
    <property type="interactions" value="7"/>
</dbReference>
<dbReference type="FunCoup" id="Q8K297">
    <property type="interactions" value="1182"/>
</dbReference>
<dbReference type="IntAct" id="Q8K297">
    <property type="interactions" value="2"/>
</dbReference>
<dbReference type="MINT" id="Q8K297"/>
<dbReference type="STRING" id="10090.ENSMUSP00000047923"/>
<dbReference type="CAZy" id="GT25">
    <property type="family name" value="Glycosyltransferase Family 25"/>
</dbReference>
<dbReference type="GlyConnect" id="2606">
    <property type="glycosylation" value="2 N-Linked glycans (1 site)"/>
</dbReference>
<dbReference type="GlyCosmos" id="Q8K297">
    <property type="glycosylation" value="3 sites, 2 glycans"/>
</dbReference>
<dbReference type="GlyGen" id="Q8K297">
    <property type="glycosylation" value="4 sites, 4 N-linked glycans (2 sites), 1 O-linked glycan (1 site)"/>
</dbReference>
<dbReference type="iPTMnet" id="Q8K297"/>
<dbReference type="PhosphoSitePlus" id="Q8K297"/>
<dbReference type="SwissPalm" id="Q8K297"/>
<dbReference type="PaxDb" id="10090-ENSMUSP00000047923"/>
<dbReference type="PeptideAtlas" id="Q8K297"/>
<dbReference type="ProteomicsDB" id="271057"/>
<dbReference type="Pumba" id="Q8K297"/>
<dbReference type="Antibodypedia" id="54139">
    <property type="antibodies" value="49 antibodies from 14 providers"/>
</dbReference>
<dbReference type="DNASU" id="234407"/>
<dbReference type="Ensembl" id="ENSMUST00000047903.10">
    <property type="protein sequence ID" value="ENSMUSP00000047923.9"/>
    <property type="gene ID" value="ENSMUSG00000034807.10"/>
</dbReference>
<dbReference type="GeneID" id="234407"/>
<dbReference type="KEGG" id="mmu:234407"/>
<dbReference type="UCSC" id="uc009mee.2">
    <property type="organism name" value="mouse"/>
</dbReference>
<dbReference type="AGR" id="MGI:1924348"/>
<dbReference type="CTD" id="79709"/>
<dbReference type="MGI" id="MGI:1924348">
    <property type="gene designation" value="Colgalt1"/>
</dbReference>
<dbReference type="VEuPathDB" id="HostDB:ENSMUSG00000034807"/>
<dbReference type="eggNOG" id="KOG4179">
    <property type="taxonomic scope" value="Eukaryota"/>
</dbReference>
<dbReference type="GeneTree" id="ENSGT01030000234558"/>
<dbReference type="HOGENOM" id="CLU_024037_2_0_1"/>
<dbReference type="InParanoid" id="Q8K297"/>
<dbReference type="OMA" id="VVWNNEQ"/>
<dbReference type="OrthoDB" id="47375at2759"/>
<dbReference type="PhylomeDB" id="Q8K297"/>
<dbReference type="TreeFam" id="TF313826"/>
<dbReference type="BRENDA" id="2.4.1.50">
    <property type="organism ID" value="3474"/>
</dbReference>
<dbReference type="Reactome" id="R-MMU-1650814">
    <property type="pathway name" value="Collagen biosynthesis and modifying enzymes"/>
</dbReference>
<dbReference type="BioGRID-ORCS" id="234407">
    <property type="hits" value="2 hits in 77 CRISPR screens"/>
</dbReference>
<dbReference type="ChiTaRS" id="Colgalt1">
    <property type="organism name" value="mouse"/>
</dbReference>
<dbReference type="PRO" id="PR:Q8K297"/>
<dbReference type="Proteomes" id="UP000000589">
    <property type="component" value="Chromosome 8"/>
</dbReference>
<dbReference type="RNAct" id="Q8K297">
    <property type="molecule type" value="protein"/>
</dbReference>
<dbReference type="Bgee" id="ENSMUSG00000034807">
    <property type="expression patterns" value="Expressed in vault of skull and 271 other cell types or tissues"/>
</dbReference>
<dbReference type="GO" id="GO:0005788">
    <property type="term" value="C:endoplasmic reticulum lumen"/>
    <property type="evidence" value="ECO:0000250"/>
    <property type="project" value="UniProtKB"/>
</dbReference>
<dbReference type="GO" id="GO:0050211">
    <property type="term" value="F:procollagen galactosyltransferase activity"/>
    <property type="evidence" value="ECO:0000250"/>
    <property type="project" value="UniProtKB"/>
</dbReference>
<dbReference type="GO" id="GO:1904028">
    <property type="term" value="P:positive regulation of collagen fibril organization"/>
    <property type="evidence" value="ECO:0000250"/>
    <property type="project" value="UniProtKB"/>
</dbReference>
<dbReference type="CDD" id="cd06532">
    <property type="entry name" value="Glyco_transf_25"/>
    <property type="match status" value="1"/>
</dbReference>
<dbReference type="FunFam" id="3.90.550.10:FF:000048">
    <property type="entry name" value="Glycosyltransferase 25 family member 1"/>
    <property type="match status" value="1"/>
</dbReference>
<dbReference type="Gene3D" id="3.90.550.10">
    <property type="entry name" value="Spore Coat Polysaccharide Biosynthesis Protein SpsA, Chain A"/>
    <property type="match status" value="1"/>
</dbReference>
<dbReference type="InterPro" id="IPR050757">
    <property type="entry name" value="Collagen_mod_GT25"/>
</dbReference>
<dbReference type="InterPro" id="IPR002654">
    <property type="entry name" value="Glyco_trans_25"/>
</dbReference>
<dbReference type="InterPro" id="IPR029044">
    <property type="entry name" value="Nucleotide-diphossugar_trans"/>
</dbReference>
<dbReference type="PANTHER" id="PTHR10730:SF28">
    <property type="entry name" value="PROCOLLAGEN GALACTOSYLTRANSFERASE 1"/>
    <property type="match status" value="1"/>
</dbReference>
<dbReference type="PANTHER" id="PTHR10730">
    <property type="entry name" value="PROCOLLAGEN-LYSINE,2-OXOGLUTARATE 5-DIOXYGENASE/GLYCOSYLTRANSFERASE 25 FAMILY MEMBER"/>
    <property type="match status" value="1"/>
</dbReference>
<dbReference type="Pfam" id="PF13704">
    <property type="entry name" value="Glyco_tranf_2_4"/>
    <property type="match status" value="1"/>
</dbReference>
<dbReference type="Pfam" id="PF01755">
    <property type="entry name" value="Glyco_transf_25"/>
    <property type="match status" value="1"/>
</dbReference>
<dbReference type="SUPFAM" id="SSF53448">
    <property type="entry name" value="Nucleotide-diphospho-sugar transferases"/>
    <property type="match status" value="1"/>
</dbReference>
<dbReference type="PROSITE" id="PS00014">
    <property type="entry name" value="ER_TARGET"/>
    <property type="match status" value="1"/>
</dbReference>
<evidence type="ECO:0000250" key="1">
    <source>
        <dbReference type="UniProtKB" id="Q8NBJ5"/>
    </source>
</evidence>
<evidence type="ECO:0000255" key="2"/>
<evidence type="ECO:0000255" key="3">
    <source>
        <dbReference type="PROSITE-ProRule" id="PRU10138"/>
    </source>
</evidence>
<evidence type="ECO:0000256" key="4">
    <source>
        <dbReference type="SAM" id="MobiDB-lite"/>
    </source>
</evidence>
<evidence type="ECO:0000269" key="5">
    <source>
    </source>
</evidence>
<evidence type="ECO:0000305" key="6"/>
<sequence length="617" mass="71061">MAALPRGSRGLPLLPLLLLLPPLGGPRGADGYFPEERWSPESPLQAPRVLIALLARNAAPALPATLGALEQLRHPRERTALWVATDHNTDNTSAILREWLVAVKGLYHSVEWRPAEEPSSYPDEEGPKHWSDSRYEHVMKLRQAALKSARDMWADYILFMDIDNLITNPDTLSLLIAENKTVVAPMLDSRAAYSNFWCGMTSQGYYKRTPAYIPIRKRDRRGCFAVPMVHSTFLIDLRKAASRNLAFYPTHPDYTWSFDDIIVFAFSCKQAEVQMYVCNKEVYGFLPVPLRAHSSLQDEAESFMHVQLEVMVKHPPVQLSRFISAPRKTSDKMGFDEVFMINLKRRRDRRERMLRALHEQEIDCQLVEAVDGKAMNTSQVEAMGIQMLPGYRDPYHGRPLTKGELGCFLSHYNIWKEVVDRGLQKSLVFEDDLRFEIFFKRRLMNLMRDVEREGLDWDLIYVGRKRMQVEHPEKAVPHVRNLVEADYSYWTLAYVISLQGAQKLLAAKPLAKMLPVDEFLPVMFDKHPMSEYKSHFSPRNLRAFSVEPLLIYPTHYTGDDGYVSDTETSVVWNNEQVKTDWDRAKSQKMREQQALSREAKNSDVLQSPLDSTARDEL</sequence>
<feature type="signal peptide" evidence="2">
    <location>
        <begin position="1"/>
        <end position="31"/>
    </location>
</feature>
<feature type="chain" id="PRO_0000309537" description="Procollagen galactosyltransferase 1">
    <location>
        <begin position="32"/>
        <end position="617"/>
    </location>
</feature>
<feature type="region of interest" description="Disordered" evidence="4">
    <location>
        <begin position="582"/>
        <end position="617"/>
    </location>
</feature>
<feature type="short sequence motif" description="Prevents secretion from ER" evidence="3">
    <location>
        <begin position="614"/>
        <end position="617"/>
    </location>
</feature>
<feature type="compositionally biased region" description="Basic and acidic residues" evidence="4">
    <location>
        <begin position="582"/>
        <end position="601"/>
    </location>
</feature>
<feature type="glycosylation site" description="N-linked (GlcNAc...) asparagine" evidence="5">
    <location>
        <position position="91"/>
    </location>
</feature>
<feature type="glycosylation site" description="N-linked (GlcNAc...) asparagine" evidence="2">
    <location>
        <position position="179"/>
    </location>
</feature>
<feature type="glycosylation site" description="N-linked (GlcNAc...) asparagine" evidence="2">
    <location>
        <position position="376"/>
    </location>
</feature>
<feature type="sequence conflict" description="In Ref. 1; BAE43293." evidence="6" ref="1">
    <original>S</original>
    <variation>L</variation>
    <location>
        <position position="8"/>
    </location>
</feature>
<feature type="sequence conflict" description="In Ref. 1; BAE43293." evidence="6" ref="1">
    <original>D</original>
    <variation>A</variation>
    <location>
        <position position="30"/>
    </location>
</feature>
<feature type="sequence conflict" description="In Ref. 2; AAH32165." evidence="6" ref="2">
    <original>T</original>
    <variation>P</variation>
    <location>
        <position position="250"/>
    </location>
</feature>